<protein>
    <recommendedName>
        <fullName evidence="1">Pyrrolidone-carboxylate peptidase</fullName>
        <ecNumber evidence="1">3.4.19.3</ecNumber>
    </recommendedName>
    <alternativeName>
        <fullName evidence="1">5-oxoprolyl-peptidase</fullName>
    </alternativeName>
    <alternativeName>
        <fullName evidence="1">Pyroglutamyl-peptidase I</fullName>
        <shortName evidence="1">PGP-I</shortName>
        <shortName evidence="1">Pyrase</shortName>
    </alternativeName>
</protein>
<proteinExistence type="inferred from homology"/>
<gene>
    <name evidence="1" type="primary">pcp</name>
    <name type="ordered locus">BALH_2757</name>
</gene>
<keyword id="KW-0963">Cytoplasm</keyword>
<keyword id="KW-0378">Hydrolase</keyword>
<keyword id="KW-0645">Protease</keyword>
<keyword id="KW-0788">Thiol protease</keyword>
<reference key="1">
    <citation type="journal article" date="2007" name="J. Bacteriol.">
        <title>The complete genome sequence of Bacillus thuringiensis Al Hakam.</title>
        <authorList>
            <person name="Challacombe J.F."/>
            <person name="Altherr M.R."/>
            <person name="Xie G."/>
            <person name="Bhotika S.S."/>
            <person name="Brown N."/>
            <person name="Bruce D."/>
            <person name="Campbell C.S."/>
            <person name="Campbell M.L."/>
            <person name="Chen J."/>
            <person name="Chertkov O."/>
            <person name="Cleland C."/>
            <person name="Dimitrijevic M."/>
            <person name="Doggett N.A."/>
            <person name="Fawcett J.J."/>
            <person name="Glavina T."/>
            <person name="Goodwin L.A."/>
            <person name="Green L.D."/>
            <person name="Han C.S."/>
            <person name="Hill K.K."/>
            <person name="Hitchcock P."/>
            <person name="Jackson P.J."/>
            <person name="Keim P."/>
            <person name="Kewalramani A.R."/>
            <person name="Longmire J."/>
            <person name="Lucas S."/>
            <person name="Malfatti S."/>
            <person name="Martinez D."/>
            <person name="McMurry K."/>
            <person name="Meincke L.J."/>
            <person name="Misra M."/>
            <person name="Moseman B.L."/>
            <person name="Mundt M."/>
            <person name="Munk A.C."/>
            <person name="Okinaka R.T."/>
            <person name="Parson-Quintana B."/>
            <person name="Reilly L.P."/>
            <person name="Richardson P."/>
            <person name="Robinson D.L."/>
            <person name="Saunders E."/>
            <person name="Tapia R."/>
            <person name="Tesmer J.G."/>
            <person name="Thayer N."/>
            <person name="Thompson L.S."/>
            <person name="Tice H."/>
            <person name="Ticknor L.O."/>
            <person name="Wills P.L."/>
            <person name="Gilna P."/>
            <person name="Brettin T.S."/>
        </authorList>
    </citation>
    <scope>NUCLEOTIDE SEQUENCE [LARGE SCALE GENOMIC DNA]</scope>
    <source>
        <strain>Al Hakam</strain>
    </source>
</reference>
<dbReference type="EC" id="3.4.19.3" evidence="1"/>
<dbReference type="EMBL" id="CP000485">
    <property type="protein sequence ID" value="ABK86036.1"/>
    <property type="molecule type" value="Genomic_DNA"/>
</dbReference>
<dbReference type="RefSeq" id="WP_000859737.1">
    <property type="nucleotide sequence ID" value="NC_008600.1"/>
</dbReference>
<dbReference type="SMR" id="A0RFP3"/>
<dbReference type="MEROPS" id="C15.001"/>
<dbReference type="KEGG" id="btl:BALH_2757"/>
<dbReference type="HOGENOM" id="CLU_043960_4_0_9"/>
<dbReference type="GO" id="GO:0005829">
    <property type="term" value="C:cytosol"/>
    <property type="evidence" value="ECO:0007669"/>
    <property type="project" value="InterPro"/>
</dbReference>
<dbReference type="GO" id="GO:0016920">
    <property type="term" value="F:pyroglutamyl-peptidase activity"/>
    <property type="evidence" value="ECO:0007669"/>
    <property type="project" value="UniProtKB-UniRule"/>
</dbReference>
<dbReference type="GO" id="GO:0006508">
    <property type="term" value="P:proteolysis"/>
    <property type="evidence" value="ECO:0007669"/>
    <property type="project" value="UniProtKB-KW"/>
</dbReference>
<dbReference type="CDD" id="cd00501">
    <property type="entry name" value="Peptidase_C15"/>
    <property type="match status" value="1"/>
</dbReference>
<dbReference type="FunFam" id="3.40.630.20:FF:000001">
    <property type="entry name" value="Pyrrolidone-carboxylate peptidase"/>
    <property type="match status" value="1"/>
</dbReference>
<dbReference type="Gene3D" id="3.40.630.20">
    <property type="entry name" value="Peptidase C15, pyroglutamyl peptidase I-like"/>
    <property type="match status" value="1"/>
</dbReference>
<dbReference type="HAMAP" id="MF_00417">
    <property type="entry name" value="Pyrrolid_peptidase"/>
    <property type="match status" value="1"/>
</dbReference>
<dbReference type="InterPro" id="IPR000816">
    <property type="entry name" value="Peptidase_C15"/>
</dbReference>
<dbReference type="InterPro" id="IPR016125">
    <property type="entry name" value="Peptidase_C15-like"/>
</dbReference>
<dbReference type="InterPro" id="IPR036440">
    <property type="entry name" value="Peptidase_C15-like_sf"/>
</dbReference>
<dbReference type="InterPro" id="IPR029762">
    <property type="entry name" value="PGP-I_bact-type"/>
</dbReference>
<dbReference type="InterPro" id="IPR033694">
    <property type="entry name" value="PGPEP1_Cys_AS"/>
</dbReference>
<dbReference type="InterPro" id="IPR033693">
    <property type="entry name" value="PGPEP1_Glu_AS"/>
</dbReference>
<dbReference type="NCBIfam" id="NF009676">
    <property type="entry name" value="PRK13197.1"/>
    <property type="match status" value="1"/>
</dbReference>
<dbReference type="NCBIfam" id="TIGR00504">
    <property type="entry name" value="pyro_pdase"/>
    <property type="match status" value="1"/>
</dbReference>
<dbReference type="PANTHER" id="PTHR23402">
    <property type="entry name" value="PROTEASE FAMILY C15 PYROGLUTAMYL-PEPTIDASE I-RELATED"/>
    <property type="match status" value="1"/>
</dbReference>
<dbReference type="PANTHER" id="PTHR23402:SF1">
    <property type="entry name" value="PYROGLUTAMYL-PEPTIDASE I"/>
    <property type="match status" value="1"/>
</dbReference>
<dbReference type="Pfam" id="PF01470">
    <property type="entry name" value="Peptidase_C15"/>
    <property type="match status" value="1"/>
</dbReference>
<dbReference type="PIRSF" id="PIRSF015592">
    <property type="entry name" value="Prld-crbxl_pptds"/>
    <property type="match status" value="1"/>
</dbReference>
<dbReference type="PRINTS" id="PR00706">
    <property type="entry name" value="PYROGLUPTASE"/>
</dbReference>
<dbReference type="SUPFAM" id="SSF53182">
    <property type="entry name" value="Pyrrolidone carboxyl peptidase (pyroglutamate aminopeptidase)"/>
    <property type="match status" value="1"/>
</dbReference>
<dbReference type="PROSITE" id="PS01334">
    <property type="entry name" value="PYRASE_CYS"/>
    <property type="match status" value="1"/>
</dbReference>
<dbReference type="PROSITE" id="PS01333">
    <property type="entry name" value="PYRASE_GLU"/>
    <property type="match status" value="1"/>
</dbReference>
<accession>A0RFP3</accession>
<evidence type="ECO:0000255" key="1">
    <source>
        <dbReference type="HAMAP-Rule" id="MF_00417"/>
    </source>
</evidence>
<sequence length="215" mass="23531">MKTVLLTGFDPFGGESINPAWEVAKSLHEKTIGEYKIISKQVPTVFHKSISVLKEYIEELAPEFIICIGQAGGRTDITIERVAINIDDARIADNEGNQPVDVPVVEEGPAAYWSTLPMKAIVKKLQEEGIPASVSQTAGTFVCNHLFYGLMHELEKHDTKMKGGFIHIPFLPEQASNYPGQPSMSLSTIRKGIELAVEVTTTVEVDIVEIGGTTH</sequence>
<name>PCP_BACAH</name>
<comment type="function">
    <text evidence="1">Removes 5-oxoproline from various penultimate amino acid residues except L-proline.</text>
</comment>
<comment type="catalytic activity">
    <reaction evidence="1">
        <text>Release of an N-terminal pyroglutamyl group from a polypeptide, the second amino acid generally not being Pro.</text>
        <dbReference type="EC" id="3.4.19.3"/>
    </reaction>
</comment>
<comment type="subunit">
    <text evidence="1">Homotetramer.</text>
</comment>
<comment type="subcellular location">
    <subcellularLocation>
        <location evidence="1">Cytoplasm</location>
    </subcellularLocation>
</comment>
<comment type="similarity">
    <text evidence="1">Belongs to the peptidase C15 family.</text>
</comment>
<feature type="chain" id="PRO_1000050122" description="Pyrrolidone-carboxylate peptidase">
    <location>
        <begin position="1"/>
        <end position="215"/>
    </location>
</feature>
<feature type="active site" evidence="1">
    <location>
        <position position="80"/>
    </location>
</feature>
<feature type="active site" evidence="1">
    <location>
        <position position="143"/>
    </location>
</feature>
<feature type="active site" evidence="1">
    <location>
        <position position="167"/>
    </location>
</feature>
<organism>
    <name type="scientific">Bacillus thuringiensis (strain Al Hakam)</name>
    <dbReference type="NCBI Taxonomy" id="412694"/>
    <lineage>
        <taxon>Bacteria</taxon>
        <taxon>Bacillati</taxon>
        <taxon>Bacillota</taxon>
        <taxon>Bacilli</taxon>
        <taxon>Bacillales</taxon>
        <taxon>Bacillaceae</taxon>
        <taxon>Bacillus</taxon>
        <taxon>Bacillus cereus group</taxon>
    </lineage>
</organism>